<gene>
    <name evidence="1" type="primary">rplA</name>
    <name type="ordered locus">M446_0365</name>
</gene>
<evidence type="ECO:0000255" key="1">
    <source>
        <dbReference type="HAMAP-Rule" id="MF_01318"/>
    </source>
</evidence>
<evidence type="ECO:0000305" key="2"/>
<dbReference type="EMBL" id="CP000943">
    <property type="protein sequence ID" value="ACA14936.1"/>
    <property type="molecule type" value="Genomic_DNA"/>
</dbReference>
<dbReference type="RefSeq" id="WP_012330354.1">
    <property type="nucleotide sequence ID" value="NC_010511.1"/>
</dbReference>
<dbReference type="SMR" id="B0UHY1"/>
<dbReference type="STRING" id="426117.M446_0365"/>
<dbReference type="KEGG" id="met:M446_0365"/>
<dbReference type="eggNOG" id="COG0081">
    <property type="taxonomic scope" value="Bacteria"/>
</dbReference>
<dbReference type="HOGENOM" id="CLU_062853_0_0_5"/>
<dbReference type="GO" id="GO:0022625">
    <property type="term" value="C:cytosolic large ribosomal subunit"/>
    <property type="evidence" value="ECO:0007669"/>
    <property type="project" value="TreeGrafter"/>
</dbReference>
<dbReference type="GO" id="GO:0019843">
    <property type="term" value="F:rRNA binding"/>
    <property type="evidence" value="ECO:0007669"/>
    <property type="project" value="UniProtKB-UniRule"/>
</dbReference>
<dbReference type="GO" id="GO:0003735">
    <property type="term" value="F:structural constituent of ribosome"/>
    <property type="evidence" value="ECO:0007669"/>
    <property type="project" value="InterPro"/>
</dbReference>
<dbReference type="GO" id="GO:0000049">
    <property type="term" value="F:tRNA binding"/>
    <property type="evidence" value="ECO:0007669"/>
    <property type="project" value="UniProtKB-KW"/>
</dbReference>
<dbReference type="GO" id="GO:0006417">
    <property type="term" value="P:regulation of translation"/>
    <property type="evidence" value="ECO:0007669"/>
    <property type="project" value="UniProtKB-KW"/>
</dbReference>
<dbReference type="GO" id="GO:0006412">
    <property type="term" value="P:translation"/>
    <property type="evidence" value="ECO:0007669"/>
    <property type="project" value="UniProtKB-UniRule"/>
</dbReference>
<dbReference type="CDD" id="cd00403">
    <property type="entry name" value="Ribosomal_L1"/>
    <property type="match status" value="1"/>
</dbReference>
<dbReference type="FunFam" id="3.40.50.790:FF:000001">
    <property type="entry name" value="50S ribosomal protein L1"/>
    <property type="match status" value="1"/>
</dbReference>
<dbReference type="Gene3D" id="3.30.190.20">
    <property type="match status" value="1"/>
</dbReference>
<dbReference type="Gene3D" id="3.40.50.790">
    <property type="match status" value="1"/>
</dbReference>
<dbReference type="HAMAP" id="MF_01318_B">
    <property type="entry name" value="Ribosomal_uL1_B"/>
    <property type="match status" value="1"/>
</dbReference>
<dbReference type="InterPro" id="IPR005878">
    <property type="entry name" value="Ribosom_uL1_bac-type"/>
</dbReference>
<dbReference type="InterPro" id="IPR002143">
    <property type="entry name" value="Ribosomal_uL1"/>
</dbReference>
<dbReference type="InterPro" id="IPR023674">
    <property type="entry name" value="Ribosomal_uL1-like"/>
</dbReference>
<dbReference type="InterPro" id="IPR028364">
    <property type="entry name" value="Ribosomal_uL1/biogenesis"/>
</dbReference>
<dbReference type="InterPro" id="IPR016095">
    <property type="entry name" value="Ribosomal_uL1_3-a/b-sand"/>
</dbReference>
<dbReference type="InterPro" id="IPR023673">
    <property type="entry name" value="Ribosomal_uL1_CS"/>
</dbReference>
<dbReference type="NCBIfam" id="TIGR01169">
    <property type="entry name" value="rplA_bact"/>
    <property type="match status" value="1"/>
</dbReference>
<dbReference type="PANTHER" id="PTHR36427">
    <property type="entry name" value="54S RIBOSOMAL PROTEIN L1, MITOCHONDRIAL"/>
    <property type="match status" value="1"/>
</dbReference>
<dbReference type="PANTHER" id="PTHR36427:SF3">
    <property type="entry name" value="LARGE RIBOSOMAL SUBUNIT PROTEIN UL1M"/>
    <property type="match status" value="1"/>
</dbReference>
<dbReference type="Pfam" id="PF00687">
    <property type="entry name" value="Ribosomal_L1"/>
    <property type="match status" value="1"/>
</dbReference>
<dbReference type="PIRSF" id="PIRSF002155">
    <property type="entry name" value="Ribosomal_L1"/>
    <property type="match status" value="1"/>
</dbReference>
<dbReference type="SUPFAM" id="SSF56808">
    <property type="entry name" value="Ribosomal protein L1"/>
    <property type="match status" value="1"/>
</dbReference>
<dbReference type="PROSITE" id="PS01199">
    <property type="entry name" value="RIBOSOMAL_L1"/>
    <property type="match status" value="1"/>
</dbReference>
<name>RL1_METS4</name>
<reference key="1">
    <citation type="submission" date="2008-02" db="EMBL/GenBank/DDBJ databases">
        <title>Complete sequence of chromosome of Methylobacterium sp. 4-46.</title>
        <authorList>
            <consortium name="US DOE Joint Genome Institute"/>
            <person name="Copeland A."/>
            <person name="Lucas S."/>
            <person name="Lapidus A."/>
            <person name="Glavina del Rio T."/>
            <person name="Dalin E."/>
            <person name="Tice H."/>
            <person name="Bruce D."/>
            <person name="Goodwin L."/>
            <person name="Pitluck S."/>
            <person name="Chertkov O."/>
            <person name="Brettin T."/>
            <person name="Detter J.C."/>
            <person name="Han C."/>
            <person name="Kuske C.R."/>
            <person name="Schmutz J."/>
            <person name="Larimer F."/>
            <person name="Land M."/>
            <person name="Hauser L."/>
            <person name="Kyrpides N."/>
            <person name="Ivanova N."/>
            <person name="Marx C.J."/>
            <person name="Richardson P."/>
        </authorList>
    </citation>
    <scope>NUCLEOTIDE SEQUENCE [LARGE SCALE GENOMIC DNA]</scope>
    <source>
        <strain>4-46</strain>
    </source>
</reference>
<feature type="chain" id="PRO_1000141430" description="Large ribosomal subunit protein uL1">
    <location>
        <begin position="1"/>
        <end position="235"/>
    </location>
</feature>
<organism>
    <name type="scientific">Methylobacterium sp. (strain 4-46)</name>
    <dbReference type="NCBI Taxonomy" id="426117"/>
    <lineage>
        <taxon>Bacteria</taxon>
        <taxon>Pseudomonadati</taxon>
        <taxon>Pseudomonadota</taxon>
        <taxon>Alphaproteobacteria</taxon>
        <taxon>Hyphomicrobiales</taxon>
        <taxon>Methylobacteriaceae</taxon>
        <taxon>Methylobacterium</taxon>
    </lineage>
</organism>
<accession>B0UHY1</accession>
<comment type="function">
    <text evidence="1">Binds directly to 23S rRNA. The L1 stalk is quite mobile in the ribosome, and is involved in E site tRNA release.</text>
</comment>
<comment type="function">
    <text evidence="1">Protein L1 is also a translational repressor protein, it controls the translation of the L11 operon by binding to its mRNA.</text>
</comment>
<comment type="subunit">
    <text evidence="1">Part of the 50S ribosomal subunit.</text>
</comment>
<comment type="similarity">
    <text evidence="1">Belongs to the universal ribosomal protein uL1 family.</text>
</comment>
<keyword id="KW-0678">Repressor</keyword>
<keyword id="KW-0687">Ribonucleoprotein</keyword>
<keyword id="KW-0689">Ribosomal protein</keyword>
<keyword id="KW-0694">RNA-binding</keyword>
<keyword id="KW-0699">rRNA-binding</keyword>
<keyword id="KW-0810">Translation regulation</keyword>
<keyword id="KW-0820">tRNA-binding</keyword>
<sequence>MAREGKRIRAAREGIDPTKVYSLTDAVKMIKDRSKAKFDETFEISMNLGVDPRHADQMVRGVCNLPNGSGRTVRVAVFARGAKADEARAAGADIVGAEDLLETIQGGTIDFDRCIATPDMMPLVGRLGKVLGPRGLMPNPKVGTVTMDVKGAVGAAKGGAVEFRVEKAGIVHAGIGKVSFDDQKIVENARAFADAVARAKPTGAKGTYIQRIAVSSTMGPGIKVDPASVLAAQSA</sequence>
<protein>
    <recommendedName>
        <fullName evidence="1">Large ribosomal subunit protein uL1</fullName>
    </recommendedName>
    <alternativeName>
        <fullName evidence="2">50S ribosomal protein L1</fullName>
    </alternativeName>
</protein>
<proteinExistence type="inferred from homology"/>